<proteinExistence type="inferred from homology"/>
<keyword id="KW-0217">Developmental protein</keyword>
<keyword id="KW-0238">DNA-binding</keyword>
<keyword id="KW-0302">Gap protein</keyword>
<keyword id="KW-0479">Metal-binding</keyword>
<keyword id="KW-0539">Nucleus</keyword>
<keyword id="KW-0677">Repeat</keyword>
<keyword id="KW-0862">Zinc</keyword>
<keyword id="KW-0863">Zinc-finger</keyword>
<organism>
    <name type="scientific">Drosophila iki</name>
    <name type="common">Fruit fly</name>
    <dbReference type="NCBI Taxonomy" id="58311"/>
    <lineage>
        <taxon>Eukaryota</taxon>
        <taxon>Metazoa</taxon>
        <taxon>Ecdysozoa</taxon>
        <taxon>Arthropoda</taxon>
        <taxon>Hexapoda</taxon>
        <taxon>Insecta</taxon>
        <taxon>Pterygota</taxon>
        <taxon>Neoptera</taxon>
        <taxon>Endopterygota</taxon>
        <taxon>Diptera</taxon>
        <taxon>Brachycera</taxon>
        <taxon>Muscomorpha</taxon>
        <taxon>Ephydroidea</taxon>
        <taxon>Drosophilidae</taxon>
        <taxon>Drosophila</taxon>
        <taxon>Hawaiian Drosophila</taxon>
    </lineage>
</organism>
<reference key="1">
    <citation type="journal article" date="1997" name="Syst. Biol.">
        <title>Multiple sources of character information and the phylogeny of Hawaiian Drosophilids.</title>
        <authorList>
            <person name="Baker R.H."/>
            <person name="DeSalle R."/>
        </authorList>
    </citation>
    <scope>NUCLEOTIDE SEQUENCE [GENOMIC DNA]</scope>
</reference>
<accession>O46242</accession>
<accession>O46243</accession>
<sequence length="193" mass="21084">WYSSMFAANIKQEPISHHHHHHHAHHSHHQHSHDSNSNSNASSPHQSPLPSPNPPSSNNLQLEQYLKQQQQQQQQQQPMDTLCAGAMTPSPSNNDQNSRLRPPGLPNPMQTIMPANMRPSPTATTTATTTAAAASTTTAATVALQSNDKLQALTPPMDVTPPKSPAKSQQSCAEPEKEHDLMSNSSEDMKYMA</sequence>
<comment type="function">
    <text evidence="1">Gap class segmentation protein that controls development of head structures.</text>
</comment>
<comment type="subcellular location">
    <subcellularLocation>
        <location evidence="1">Nucleus</location>
    </subcellularLocation>
</comment>
<comment type="similarity">
    <text evidence="3">Belongs to the hunchback C2H2-type zinc-finger protein family.</text>
</comment>
<gene>
    <name type="primary">hb</name>
</gene>
<name>HUNB_DROIK</name>
<dbReference type="EMBL" id="U93006">
    <property type="protein sequence ID" value="AAC03254.1"/>
    <property type="molecule type" value="Genomic_DNA"/>
</dbReference>
<dbReference type="EMBL" id="U93007">
    <property type="protein sequence ID" value="AAC03255.1"/>
    <property type="molecule type" value="Genomic_DNA"/>
</dbReference>
<dbReference type="GO" id="GO:0005634">
    <property type="term" value="C:nucleus"/>
    <property type="evidence" value="ECO:0007669"/>
    <property type="project" value="UniProtKB-SubCell"/>
</dbReference>
<dbReference type="GO" id="GO:0003677">
    <property type="term" value="F:DNA binding"/>
    <property type="evidence" value="ECO:0007669"/>
    <property type="project" value="UniProtKB-KW"/>
</dbReference>
<dbReference type="GO" id="GO:0008270">
    <property type="term" value="F:zinc ion binding"/>
    <property type="evidence" value="ECO:0007669"/>
    <property type="project" value="UniProtKB-KW"/>
</dbReference>
<dbReference type="GO" id="GO:0035282">
    <property type="term" value="P:segmentation"/>
    <property type="evidence" value="ECO:0007669"/>
    <property type="project" value="UniProtKB-KW"/>
</dbReference>
<evidence type="ECO:0000250" key="1"/>
<evidence type="ECO:0000256" key="2">
    <source>
        <dbReference type="SAM" id="MobiDB-lite"/>
    </source>
</evidence>
<evidence type="ECO:0000305" key="3"/>
<protein>
    <recommendedName>
        <fullName>Protein hunchback</fullName>
    </recommendedName>
</protein>
<feature type="chain" id="PRO_0000046955" description="Protein hunchback">
    <location>
        <begin position="1" status="less than"/>
        <end position="193" status="greater than"/>
    </location>
</feature>
<feature type="region of interest" description="Disordered" evidence="2">
    <location>
        <begin position="16"/>
        <end position="126"/>
    </location>
</feature>
<feature type="region of interest" description="Disordered" evidence="2">
    <location>
        <begin position="146"/>
        <end position="193"/>
    </location>
</feature>
<feature type="compositionally biased region" description="Basic residues" evidence="2">
    <location>
        <begin position="17"/>
        <end position="31"/>
    </location>
</feature>
<feature type="compositionally biased region" description="Low complexity" evidence="2">
    <location>
        <begin position="35"/>
        <end position="46"/>
    </location>
</feature>
<feature type="compositionally biased region" description="Low complexity" evidence="2">
    <location>
        <begin position="56"/>
        <end position="77"/>
    </location>
</feature>
<feature type="compositionally biased region" description="Polar residues" evidence="2">
    <location>
        <begin position="89"/>
        <end position="99"/>
    </location>
</feature>
<feature type="compositionally biased region" description="Basic and acidic residues" evidence="2">
    <location>
        <begin position="174"/>
        <end position="193"/>
    </location>
</feature>
<feature type="non-consecutive residues" evidence="3">
    <location>
        <begin position="98"/>
        <end position="99"/>
    </location>
</feature>
<feature type="non-terminal residue">
    <location>
        <position position="1"/>
    </location>
</feature>
<feature type="non-terminal residue">
    <location>
        <position position="193"/>
    </location>
</feature>